<proteinExistence type="inferred from homology"/>
<protein>
    <recommendedName>
        <fullName evidence="1">tRNA dimethylallyltransferase</fullName>
        <ecNumber evidence="1">2.5.1.75</ecNumber>
    </recommendedName>
    <alternativeName>
        <fullName evidence="1">Dimethylallyl diphosphate:tRNA dimethylallyltransferase</fullName>
        <shortName evidence="1">DMAPP:tRNA dimethylallyltransferase</shortName>
        <shortName evidence="1">DMATase</shortName>
    </alternativeName>
    <alternativeName>
        <fullName evidence="1">Isopentenyl-diphosphate:tRNA isopentenyltransferase</fullName>
        <shortName evidence="1">IPP transferase</shortName>
        <shortName evidence="1">IPPT</shortName>
        <shortName evidence="1">IPTase</shortName>
    </alternativeName>
</protein>
<keyword id="KW-0067">ATP-binding</keyword>
<keyword id="KW-0460">Magnesium</keyword>
<keyword id="KW-0547">Nucleotide-binding</keyword>
<keyword id="KW-0808">Transferase</keyword>
<keyword id="KW-0819">tRNA processing</keyword>
<feature type="chain" id="PRO_0000164007" description="tRNA dimethylallyltransferase">
    <location>
        <begin position="1"/>
        <end position="327"/>
    </location>
</feature>
<feature type="region of interest" description="Interaction with substrate tRNA" evidence="1">
    <location>
        <begin position="39"/>
        <end position="42"/>
    </location>
</feature>
<feature type="region of interest" description="Interaction with substrate tRNA" evidence="1">
    <location>
        <begin position="163"/>
        <end position="167"/>
    </location>
</feature>
<feature type="binding site" evidence="1">
    <location>
        <begin position="14"/>
        <end position="21"/>
    </location>
    <ligand>
        <name>ATP</name>
        <dbReference type="ChEBI" id="CHEBI:30616"/>
    </ligand>
</feature>
<feature type="binding site" evidence="1">
    <location>
        <begin position="16"/>
        <end position="21"/>
    </location>
    <ligand>
        <name>substrate</name>
    </ligand>
</feature>
<feature type="site" description="Interaction with substrate tRNA" evidence="1">
    <location>
        <position position="105"/>
    </location>
</feature>
<feature type="site" description="Interaction with substrate tRNA" evidence="1">
    <location>
        <position position="127"/>
    </location>
</feature>
<evidence type="ECO:0000255" key="1">
    <source>
        <dbReference type="HAMAP-Rule" id="MF_00185"/>
    </source>
</evidence>
<name>MIAA_XANAC</name>
<comment type="function">
    <text evidence="1">Catalyzes the transfer of a dimethylallyl group onto the adenine at position 37 in tRNAs that read codons beginning with uridine, leading to the formation of N6-(dimethylallyl)adenosine (i(6)A).</text>
</comment>
<comment type="catalytic activity">
    <reaction evidence="1">
        <text>adenosine(37) in tRNA + dimethylallyl diphosphate = N(6)-dimethylallyladenosine(37) in tRNA + diphosphate</text>
        <dbReference type="Rhea" id="RHEA:26482"/>
        <dbReference type="Rhea" id="RHEA-COMP:10162"/>
        <dbReference type="Rhea" id="RHEA-COMP:10375"/>
        <dbReference type="ChEBI" id="CHEBI:33019"/>
        <dbReference type="ChEBI" id="CHEBI:57623"/>
        <dbReference type="ChEBI" id="CHEBI:74411"/>
        <dbReference type="ChEBI" id="CHEBI:74415"/>
        <dbReference type="EC" id="2.5.1.75"/>
    </reaction>
</comment>
<comment type="cofactor">
    <cofactor evidence="1">
        <name>Mg(2+)</name>
        <dbReference type="ChEBI" id="CHEBI:18420"/>
    </cofactor>
</comment>
<comment type="subunit">
    <text evidence="1">Monomer.</text>
</comment>
<comment type="similarity">
    <text evidence="1">Belongs to the IPP transferase family.</text>
</comment>
<accession>Q8PLQ5</accession>
<gene>
    <name evidence="1" type="primary">miaA</name>
    <name type="ordered locus">XAC1734</name>
</gene>
<sequence length="327" mass="35689">MAVDQRPLAIAVMGPTASGKTALALEAAERWNGEIVSVDSALVYRGLEIGAAKPDAAMRAAVPHHLLDLRDPWQVYSAAEFAADARQAIAQIVARGRLPILAGGTGLYFRALLEGLSQLPEADQAVRASIAAEAQQIGWAGLHAQLARVDPVAAARIHATDPQRIQRALEVYRISGRPISAWQALPPGPRLPVRVLKVVLAPRERAVLHARIAHRLDAMLAQDFLTEVRRLRALPQLQAVAAPLDLPAVRAVGYRQAWQYLDGAGSLAEFRDKAIQATRQLAKRQLTWLRGELDARWFDPERDRHQLEDAIVGFLADRPAVRQASGV</sequence>
<organism>
    <name type="scientific">Xanthomonas axonopodis pv. citri (strain 306)</name>
    <dbReference type="NCBI Taxonomy" id="190486"/>
    <lineage>
        <taxon>Bacteria</taxon>
        <taxon>Pseudomonadati</taxon>
        <taxon>Pseudomonadota</taxon>
        <taxon>Gammaproteobacteria</taxon>
        <taxon>Lysobacterales</taxon>
        <taxon>Lysobacteraceae</taxon>
        <taxon>Xanthomonas</taxon>
    </lineage>
</organism>
<dbReference type="EC" id="2.5.1.75" evidence="1"/>
<dbReference type="EMBL" id="AE008923">
    <property type="protein sequence ID" value="AAM36601.1"/>
    <property type="molecule type" value="Genomic_DNA"/>
</dbReference>
<dbReference type="RefSeq" id="WP_011051112.1">
    <property type="nucleotide sequence ID" value="NC_003919.1"/>
</dbReference>
<dbReference type="SMR" id="Q8PLQ5"/>
<dbReference type="GeneID" id="66910884"/>
<dbReference type="KEGG" id="xac:XAC1734"/>
<dbReference type="eggNOG" id="COG0324">
    <property type="taxonomic scope" value="Bacteria"/>
</dbReference>
<dbReference type="HOGENOM" id="CLU_032616_0_0_6"/>
<dbReference type="Proteomes" id="UP000000576">
    <property type="component" value="Chromosome"/>
</dbReference>
<dbReference type="GO" id="GO:0005524">
    <property type="term" value="F:ATP binding"/>
    <property type="evidence" value="ECO:0007669"/>
    <property type="project" value="UniProtKB-UniRule"/>
</dbReference>
<dbReference type="GO" id="GO:0052381">
    <property type="term" value="F:tRNA dimethylallyltransferase activity"/>
    <property type="evidence" value="ECO:0007669"/>
    <property type="project" value="UniProtKB-UniRule"/>
</dbReference>
<dbReference type="GO" id="GO:0006400">
    <property type="term" value="P:tRNA modification"/>
    <property type="evidence" value="ECO:0007669"/>
    <property type="project" value="TreeGrafter"/>
</dbReference>
<dbReference type="FunFam" id="1.10.20.140:FF:000001">
    <property type="entry name" value="tRNA dimethylallyltransferase"/>
    <property type="match status" value="1"/>
</dbReference>
<dbReference type="Gene3D" id="1.10.20.140">
    <property type="match status" value="1"/>
</dbReference>
<dbReference type="Gene3D" id="3.40.50.300">
    <property type="entry name" value="P-loop containing nucleotide triphosphate hydrolases"/>
    <property type="match status" value="1"/>
</dbReference>
<dbReference type="HAMAP" id="MF_00185">
    <property type="entry name" value="IPP_trans"/>
    <property type="match status" value="1"/>
</dbReference>
<dbReference type="InterPro" id="IPR039657">
    <property type="entry name" value="Dimethylallyltransferase"/>
</dbReference>
<dbReference type="InterPro" id="IPR018022">
    <property type="entry name" value="IPT"/>
</dbReference>
<dbReference type="InterPro" id="IPR027417">
    <property type="entry name" value="P-loop_NTPase"/>
</dbReference>
<dbReference type="NCBIfam" id="TIGR00174">
    <property type="entry name" value="miaA"/>
    <property type="match status" value="1"/>
</dbReference>
<dbReference type="PANTHER" id="PTHR11088">
    <property type="entry name" value="TRNA DIMETHYLALLYLTRANSFERASE"/>
    <property type="match status" value="1"/>
</dbReference>
<dbReference type="PANTHER" id="PTHR11088:SF60">
    <property type="entry name" value="TRNA DIMETHYLALLYLTRANSFERASE"/>
    <property type="match status" value="1"/>
</dbReference>
<dbReference type="Pfam" id="PF01715">
    <property type="entry name" value="IPPT"/>
    <property type="match status" value="1"/>
</dbReference>
<dbReference type="SUPFAM" id="SSF52540">
    <property type="entry name" value="P-loop containing nucleoside triphosphate hydrolases"/>
    <property type="match status" value="1"/>
</dbReference>
<reference key="1">
    <citation type="journal article" date="2002" name="Nature">
        <title>Comparison of the genomes of two Xanthomonas pathogens with differing host specificities.</title>
        <authorList>
            <person name="da Silva A.C.R."/>
            <person name="Ferro J.A."/>
            <person name="Reinach F.C."/>
            <person name="Farah C.S."/>
            <person name="Furlan L.R."/>
            <person name="Quaggio R.B."/>
            <person name="Monteiro-Vitorello C.B."/>
            <person name="Van Sluys M.A."/>
            <person name="Almeida N.F. Jr."/>
            <person name="Alves L.M.C."/>
            <person name="do Amaral A.M."/>
            <person name="Bertolini M.C."/>
            <person name="Camargo L.E.A."/>
            <person name="Camarotte G."/>
            <person name="Cannavan F."/>
            <person name="Cardozo J."/>
            <person name="Chambergo F."/>
            <person name="Ciapina L.P."/>
            <person name="Cicarelli R.M.B."/>
            <person name="Coutinho L.L."/>
            <person name="Cursino-Santos J.R."/>
            <person name="El-Dorry H."/>
            <person name="Faria J.B."/>
            <person name="Ferreira A.J.S."/>
            <person name="Ferreira R.C.C."/>
            <person name="Ferro M.I.T."/>
            <person name="Formighieri E.F."/>
            <person name="Franco M.C."/>
            <person name="Greggio C.C."/>
            <person name="Gruber A."/>
            <person name="Katsuyama A.M."/>
            <person name="Kishi L.T."/>
            <person name="Leite R.P."/>
            <person name="Lemos E.G.M."/>
            <person name="Lemos M.V.F."/>
            <person name="Locali E.C."/>
            <person name="Machado M.A."/>
            <person name="Madeira A.M.B.N."/>
            <person name="Martinez-Rossi N.M."/>
            <person name="Martins E.C."/>
            <person name="Meidanis J."/>
            <person name="Menck C.F.M."/>
            <person name="Miyaki C.Y."/>
            <person name="Moon D.H."/>
            <person name="Moreira L.M."/>
            <person name="Novo M.T.M."/>
            <person name="Okura V.K."/>
            <person name="Oliveira M.C."/>
            <person name="Oliveira V.R."/>
            <person name="Pereira H.A."/>
            <person name="Rossi A."/>
            <person name="Sena J.A.D."/>
            <person name="Silva C."/>
            <person name="de Souza R.F."/>
            <person name="Spinola L.A.F."/>
            <person name="Takita M.A."/>
            <person name="Tamura R.E."/>
            <person name="Teixeira E.C."/>
            <person name="Tezza R.I.D."/>
            <person name="Trindade dos Santos M."/>
            <person name="Truffi D."/>
            <person name="Tsai S.M."/>
            <person name="White F.F."/>
            <person name="Setubal J.C."/>
            <person name="Kitajima J.P."/>
        </authorList>
    </citation>
    <scope>NUCLEOTIDE SEQUENCE [LARGE SCALE GENOMIC DNA]</scope>
    <source>
        <strain>306</strain>
    </source>
</reference>